<name>MIAB_CHRVO</name>
<gene>
    <name evidence="1" type="primary">miaB</name>
    <name type="ordered locus">CV_4149</name>
</gene>
<feature type="chain" id="PRO_0000374214" description="tRNA-2-methylthio-N(6)-dimethylallyladenosine synthase">
    <location>
        <begin position="1"/>
        <end position="444"/>
    </location>
</feature>
<feature type="domain" description="MTTase N-terminal" evidence="1">
    <location>
        <begin position="2"/>
        <end position="119"/>
    </location>
</feature>
<feature type="domain" description="Radical SAM core" evidence="2">
    <location>
        <begin position="142"/>
        <end position="374"/>
    </location>
</feature>
<feature type="domain" description="TRAM" evidence="1">
    <location>
        <begin position="377"/>
        <end position="440"/>
    </location>
</feature>
<feature type="binding site" evidence="1">
    <location>
        <position position="11"/>
    </location>
    <ligand>
        <name>[4Fe-4S] cluster</name>
        <dbReference type="ChEBI" id="CHEBI:49883"/>
        <label>1</label>
    </ligand>
</feature>
<feature type="binding site" evidence="1">
    <location>
        <position position="48"/>
    </location>
    <ligand>
        <name>[4Fe-4S] cluster</name>
        <dbReference type="ChEBI" id="CHEBI:49883"/>
        <label>1</label>
    </ligand>
</feature>
<feature type="binding site" evidence="1">
    <location>
        <position position="82"/>
    </location>
    <ligand>
        <name>[4Fe-4S] cluster</name>
        <dbReference type="ChEBI" id="CHEBI:49883"/>
        <label>1</label>
    </ligand>
</feature>
<feature type="binding site" evidence="1">
    <location>
        <position position="156"/>
    </location>
    <ligand>
        <name>[4Fe-4S] cluster</name>
        <dbReference type="ChEBI" id="CHEBI:49883"/>
        <label>2</label>
        <note>4Fe-4S-S-AdoMet</note>
    </ligand>
</feature>
<feature type="binding site" evidence="1">
    <location>
        <position position="160"/>
    </location>
    <ligand>
        <name>[4Fe-4S] cluster</name>
        <dbReference type="ChEBI" id="CHEBI:49883"/>
        <label>2</label>
        <note>4Fe-4S-S-AdoMet</note>
    </ligand>
</feature>
<feature type="binding site" evidence="1">
    <location>
        <position position="163"/>
    </location>
    <ligand>
        <name>[4Fe-4S] cluster</name>
        <dbReference type="ChEBI" id="CHEBI:49883"/>
        <label>2</label>
        <note>4Fe-4S-S-AdoMet</note>
    </ligand>
</feature>
<proteinExistence type="inferred from homology"/>
<sequence length="444" mass="49065">MKKVYIKTFGCQMNEYDSDKMADVLGSAEGMVKTDNPEEADVILFNTCSVREKAQEKVFSDLGRIRPLKEANPDLIIGVGGCVASQEGDAIVKRAPFVDVVFGPQTLHRLPDLIESRKQSGRSQVDISFPEIEKFDHIPPAKVDGGAAFVSIMEGCSKYCSFCVVPYTRGEEVSRPFEDVLTEIAGLAAQGVKEITLLGQNVNAYRGLMSDGEIADFALLLEYVHEVPGVERIRFTTSHPREFSQRIIDCYAKLPKLVSHLHLPVQSGSDRVLMAMKRGYTGLEYKSIIRKLRAIRPDLCLSSDFIIGFPGETEADFEQTLKLVRDCEFDFSFVFIYSPRPGTPAANLPDDTPHAEKVRRLEALNEVIEAKGYAINQSMVGTVQRVLVENVSKKDATMLAARTANNRVVNFAGHPRLLGRMIEVKITAAFPHSLAGEALTSESA</sequence>
<organism>
    <name type="scientific">Chromobacterium violaceum (strain ATCC 12472 / DSM 30191 / JCM 1249 / CCUG 213 / NBRC 12614 / NCIMB 9131 / NCTC 9757 / MK)</name>
    <dbReference type="NCBI Taxonomy" id="243365"/>
    <lineage>
        <taxon>Bacteria</taxon>
        <taxon>Pseudomonadati</taxon>
        <taxon>Pseudomonadota</taxon>
        <taxon>Betaproteobacteria</taxon>
        <taxon>Neisseriales</taxon>
        <taxon>Chromobacteriaceae</taxon>
        <taxon>Chromobacterium</taxon>
    </lineage>
</organism>
<dbReference type="EC" id="2.8.4.3" evidence="1"/>
<dbReference type="EMBL" id="AE016825">
    <property type="protein sequence ID" value="AAQ61810.1"/>
    <property type="molecule type" value="Genomic_DNA"/>
</dbReference>
<dbReference type="RefSeq" id="WP_011137696.1">
    <property type="nucleotide sequence ID" value="NC_005085.1"/>
</dbReference>
<dbReference type="SMR" id="Q7NQI8"/>
<dbReference type="STRING" id="243365.CV_4149"/>
<dbReference type="KEGG" id="cvi:CV_4149"/>
<dbReference type="eggNOG" id="COG0621">
    <property type="taxonomic scope" value="Bacteria"/>
</dbReference>
<dbReference type="HOGENOM" id="CLU_018697_2_0_4"/>
<dbReference type="OrthoDB" id="9805215at2"/>
<dbReference type="Proteomes" id="UP000001424">
    <property type="component" value="Chromosome"/>
</dbReference>
<dbReference type="GO" id="GO:0005829">
    <property type="term" value="C:cytosol"/>
    <property type="evidence" value="ECO:0007669"/>
    <property type="project" value="TreeGrafter"/>
</dbReference>
<dbReference type="GO" id="GO:0051539">
    <property type="term" value="F:4 iron, 4 sulfur cluster binding"/>
    <property type="evidence" value="ECO:0007669"/>
    <property type="project" value="UniProtKB-UniRule"/>
</dbReference>
<dbReference type="GO" id="GO:0046872">
    <property type="term" value="F:metal ion binding"/>
    <property type="evidence" value="ECO:0007669"/>
    <property type="project" value="UniProtKB-KW"/>
</dbReference>
<dbReference type="GO" id="GO:0035597">
    <property type="term" value="F:N6-isopentenyladenosine methylthiotransferase activity"/>
    <property type="evidence" value="ECO:0007669"/>
    <property type="project" value="TreeGrafter"/>
</dbReference>
<dbReference type="CDD" id="cd01335">
    <property type="entry name" value="Radical_SAM"/>
    <property type="match status" value="1"/>
</dbReference>
<dbReference type="FunFam" id="3.40.50.12160:FF:000001">
    <property type="entry name" value="tRNA-2-methylthio-N(6)-dimethylallyladenosine synthase"/>
    <property type="match status" value="1"/>
</dbReference>
<dbReference type="FunFam" id="3.80.30.20:FF:000001">
    <property type="entry name" value="tRNA-2-methylthio-N(6)-dimethylallyladenosine synthase 2"/>
    <property type="match status" value="1"/>
</dbReference>
<dbReference type="Gene3D" id="3.40.50.12160">
    <property type="entry name" value="Methylthiotransferase, N-terminal domain"/>
    <property type="match status" value="1"/>
</dbReference>
<dbReference type="Gene3D" id="3.80.30.20">
    <property type="entry name" value="tm_1862 like domain"/>
    <property type="match status" value="1"/>
</dbReference>
<dbReference type="HAMAP" id="MF_01864">
    <property type="entry name" value="tRNA_metthiotr_MiaB"/>
    <property type="match status" value="1"/>
</dbReference>
<dbReference type="InterPro" id="IPR006638">
    <property type="entry name" value="Elp3/MiaA/NifB-like_rSAM"/>
</dbReference>
<dbReference type="InterPro" id="IPR005839">
    <property type="entry name" value="Methylthiotransferase"/>
</dbReference>
<dbReference type="InterPro" id="IPR020612">
    <property type="entry name" value="Methylthiotransferase_CS"/>
</dbReference>
<dbReference type="InterPro" id="IPR013848">
    <property type="entry name" value="Methylthiotransferase_N"/>
</dbReference>
<dbReference type="InterPro" id="IPR038135">
    <property type="entry name" value="Methylthiotransferase_N_sf"/>
</dbReference>
<dbReference type="InterPro" id="IPR006463">
    <property type="entry name" value="MiaB_methiolase"/>
</dbReference>
<dbReference type="InterPro" id="IPR007197">
    <property type="entry name" value="rSAM"/>
</dbReference>
<dbReference type="InterPro" id="IPR023404">
    <property type="entry name" value="rSAM_horseshoe"/>
</dbReference>
<dbReference type="InterPro" id="IPR002792">
    <property type="entry name" value="TRAM_dom"/>
</dbReference>
<dbReference type="NCBIfam" id="TIGR01574">
    <property type="entry name" value="miaB-methiolase"/>
    <property type="match status" value="1"/>
</dbReference>
<dbReference type="NCBIfam" id="TIGR00089">
    <property type="entry name" value="MiaB/RimO family radical SAM methylthiotransferase"/>
    <property type="match status" value="1"/>
</dbReference>
<dbReference type="PANTHER" id="PTHR43020">
    <property type="entry name" value="CDK5 REGULATORY SUBUNIT-ASSOCIATED PROTEIN 1"/>
    <property type="match status" value="1"/>
</dbReference>
<dbReference type="PANTHER" id="PTHR43020:SF2">
    <property type="entry name" value="MITOCHONDRIAL TRNA METHYLTHIOTRANSFERASE CDK5RAP1"/>
    <property type="match status" value="1"/>
</dbReference>
<dbReference type="Pfam" id="PF04055">
    <property type="entry name" value="Radical_SAM"/>
    <property type="match status" value="1"/>
</dbReference>
<dbReference type="Pfam" id="PF01938">
    <property type="entry name" value="TRAM"/>
    <property type="match status" value="1"/>
</dbReference>
<dbReference type="Pfam" id="PF00919">
    <property type="entry name" value="UPF0004"/>
    <property type="match status" value="1"/>
</dbReference>
<dbReference type="SFLD" id="SFLDF00273">
    <property type="entry name" value="(dimethylallyl)adenosine_tRNA"/>
    <property type="match status" value="1"/>
</dbReference>
<dbReference type="SFLD" id="SFLDG01082">
    <property type="entry name" value="B12-binding_domain_containing"/>
    <property type="match status" value="1"/>
</dbReference>
<dbReference type="SFLD" id="SFLDS00029">
    <property type="entry name" value="Radical_SAM"/>
    <property type="match status" value="1"/>
</dbReference>
<dbReference type="SMART" id="SM00729">
    <property type="entry name" value="Elp3"/>
    <property type="match status" value="1"/>
</dbReference>
<dbReference type="SUPFAM" id="SSF102114">
    <property type="entry name" value="Radical SAM enzymes"/>
    <property type="match status" value="1"/>
</dbReference>
<dbReference type="PROSITE" id="PS51449">
    <property type="entry name" value="MTTASE_N"/>
    <property type="match status" value="1"/>
</dbReference>
<dbReference type="PROSITE" id="PS01278">
    <property type="entry name" value="MTTASE_RADICAL"/>
    <property type="match status" value="1"/>
</dbReference>
<dbReference type="PROSITE" id="PS51918">
    <property type="entry name" value="RADICAL_SAM"/>
    <property type="match status" value="1"/>
</dbReference>
<dbReference type="PROSITE" id="PS50926">
    <property type="entry name" value="TRAM"/>
    <property type="match status" value="1"/>
</dbReference>
<protein>
    <recommendedName>
        <fullName evidence="1">tRNA-2-methylthio-N(6)-dimethylallyladenosine synthase</fullName>
        <ecNumber evidence="1">2.8.4.3</ecNumber>
    </recommendedName>
    <alternativeName>
        <fullName evidence="1">(Dimethylallyl)adenosine tRNA methylthiotransferase MiaB</fullName>
    </alternativeName>
    <alternativeName>
        <fullName evidence="1">tRNA-i(6)A37 methylthiotransferase</fullName>
    </alternativeName>
</protein>
<reference key="1">
    <citation type="journal article" date="2003" name="Proc. Natl. Acad. Sci. U.S.A.">
        <title>The complete genome sequence of Chromobacterium violaceum reveals remarkable and exploitable bacterial adaptability.</title>
        <authorList>
            <person name="Vasconcelos A.T.R."/>
            <person name="de Almeida D.F."/>
            <person name="Hungria M."/>
            <person name="Guimaraes C.T."/>
            <person name="Antonio R.V."/>
            <person name="Almeida F.C."/>
            <person name="de Almeida L.G.P."/>
            <person name="de Almeida R."/>
            <person name="Alves-Gomes J.A."/>
            <person name="Andrade E.M."/>
            <person name="Araripe J."/>
            <person name="de Araujo M.F.F."/>
            <person name="Astolfi-Filho S."/>
            <person name="Azevedo V."/>
            <person name="Baptista A.J."/>
            <person name="Bataus L.A.M."/>
            <person name="Batista J.S."/>
            <person name="Belo A."/>
            <person name="van den Berg C."/>
            <person name="Bogo M."/>
            <person name="Bonatto S."/>
            <person name="Bordignon J."/>
            <person name="Brigido M.M."/>
            <person name="Brito C.A."/>
            <person name="Brocchi M."/>
            <person name="Burity H.A."/>
            <person name="Camargo A.A."/>
            <person name="Cardoso D.D.P."/>
            <person name="Carneiro N.P."/>
            <person name="Carraro D.M."/>
            <person name="Carvalho C.M.B."/>
            <person name="Cascardo J.C.M."/>
            <person name="Cavada B.S."/>
            <person name="Chueire L.M.O."/>
            <person name="Creczynski-Pasa T.B."/>
            <person name="Cunha-Junior N.C."/>
            <person name="Fagundes N."/>
            <person name="Falcao C.L."/>
            <person name="Fantinatti F."/>
            <person name="Farias I.P."/>
            <person name="Felipe M.S.S."/>
            <person name="Ferrari L.P."/>
            <person name="Ferro J.A."/>
            <person name="Ferro M.I.T."/>
            <person name="Franco G.R."/>
            <person name="Freitas N.S.A."/>
            <person name="Furlan L.R."/>
            <person name="Gazzinelli R.T."/>
            <person name="Gomes E.A."/>
            <person name="Goncalves P.R."/>
            <person name="Grangeiro T.B."/>
            <person name="Grattapaglia D."/>
            <person name="Grisard E.C."/>
            <person name="Hanna E.S."/>
            <person name="Jardim S.N."/>
            <person name="Laurino J."/>
            <person name="Leoi L.C.T."/>
            <person name="Lima L.F.A."/>
            <person name="Loureiro M.F."/>
            <person name="Lyra M.C.C.P."/>
            <person name="Madeira H.M.F."/>
            <person name="Manfio G.P."/>
            <person name="Maranhao A.Q."/>
            <person name="Martins W.S."/>
            <person name="di Mauro S.M.Z."/>
            <person name="de Medeiros S.R.B."/>
            <person name="Meissner R.V."/>
            <person name="Moreira M.A.M."/>
            <person name="Nascimento F.F."/>
            <person name="Nicolas M.F."/>
            <person name="Oliveira J.G."/>
            <person name="Oliveira S.C."/>
            <person name="Paixao R.F.C."/>
            <person name="Parente J.A."/>
            <person name="Pedrosa F.O."/>
            <person name="Pena S.D.J."/>
            <person name="Pereira J.O."/>
            <person name="Pereira M."/>
            <person name="Pinto L.S.R.C."/>
            <person name="Pinto L.S."/>
            <person name="Porto J.I.R."/>
            <person name="Potrich D.P."/>
            <person name="Ramalho-Neto C.E."/>
            <person name="Reis A.M.M."/>
            <person name="Rigo L.U."/>
            <person name="Rondinelli E."/>
            <person name="Santos E.B.P."/>
            <person name="Santos F.R."/>
            <person name="Schneider M.P.C."/>
            <person name="Seuanez H.N."/>
            <person name="Silva A.M.R."/>
            <person name="da Silva A.L.C."/>
            <person name="Silva D.W."/>
            <person name="Silva R."/>
            <person name="Simoes I.C."/>
            <person name="Simon D."/>
            <person name="Soares C.M.A."/>
            <person name="Soares R.B.A."/>
            <person name="Souza E.M."/>
            <person name="Souza K.R.L."/>
            <person name="Souza R.C."/>
            <person name="Steffens M.B.R."/>
            <person name="Steindel M."/>
            <person name="Teixeira S.R."/>
            <person name="Urmenyi T."/>
            <person name="Vettore A."/>
            <person name="Wassem R."/>
            <person name="Zaha A."/>
            <person name="Simpson A.J.G."/>
        </authorList>
    </citation>
    <scope>NUCLEOTIDE SEQUENCE [LARGE SCALE GENOMIC DNA]</scope>
    <source>
        <strain>ATCC 12472 / DSM 30191 / JCM 1249 / CCUG 213 / NBRC 12614 / NCIMB 9131 / NCTC 9757 / MK</strain>
    </source>
</reference>
<keyword id="KW-0004">4Fe-4S</keyword>
<keyword id="KW-0963">Cytoplasm</keyword>
<keyword id="KW-0408">Iron</keyword>
<keyword id="KW-0411">Iron-sulfur</keyword>
<keyword id="KW-0479">Metal-binding</keyword>
<keyword id="KW-1185">Reference proteome</keyword>
<keyword id="KW-0949">S-adenosyl-L-methionine</keyword>
<keyword id="KW-0808">Transferase</keyword>
<keyword id="KW-0819">tRNA processing</keyword>
<accession>Q7NQI8</accession>
<evidence type="ECO:0000255" key="1">
    <source>
        <dbReference type="HAMAP-Rule" id="MF_01864"/>
    </source>
</evidence>
<evidence type="ECO:0000255" key="2">
    <source>
        <dbReference type="PROSITE-ProRule" id="PRU01266"/>
    </source>
</evidence>
<comment type="function">
    <text evidence="1">Catalyzes the methylthiolation of N6-(dimethylallyl)adenosine (i(6)A), leading to the formation of 2-methylthio-N6-(dimethylallyl)adenosine (ms(2)i(6)A) at position 37 in tRNAs that read codons beginning with uridine.</text>
</comment>
<comment type="catalytic activity">
    <reaction evidence="1">
        <text>N(6)-dimethylallyladenosine(37) in tRNA + (sulfur carrier)-SH + AH2 + 2 S-adenosyl-L-methionine = 2-methylsulfanyl-N(6)-dimethylallyladenosine(37) in tRNA + (sulfur carrier)-H + 5'-deoxyadenosine + L-methionine + A + S-adenosyl-L-homocysteine + 2 H(+)</text>
        <dbReference type="Rhea" id="RHEA:37067"/>
        <dbReference type="Rhea" id="RHEA-COMP:10375"/>
        <dbReference type="Rhea" id="RHEA-COMP:10376"/>
        <dbReference type="Rhea" id="RHEA-COMP:14737"/>
        <dbReference type="Rhea" id="RHEA-COMP:14739"/>
        <dbReference type="ChEBI" id="CHEBI:13193"/>
        <dbReference type="ChEBI" id="CHEBI:15378"/>
        <dbReference type="ChEBI" id="CHEBI:17319"/>
        <dbReference type="ChEBI" id="CHEBI:17499"/>
        <dbReference type="ChEBI" id="CHEBI:29917"/>
        <dbReference type="ChEBI" id="CHEBI:57844"/>
        <dbReference type="ChEBI" id="CHEBI:57856"/>
        <dbReference type="ChEBI" id="CHEBI:59789"/>
        <dbReference type="ChEBI" id="CHEBI:64428"/>
        <dbReference type="ChEBI" id="CHEBI:74415"/>
        <dbReference type="ChEBI" id="CHEBI:74417"/>
        <dbReference type="EC" id="2.8.4.3"/>
    </reaction>
</comment>
<comment type="cofactor">
    <cofactor evidence="1">
        <name>[4Fe-4S] cluster</name>
        <dbReference type="ChEBI" id="CHEBI:49883"/>
    </cofactor>
    <text evidence="1">Binds 2 [4Fe-4S] clusters. One cluster is coordinated with 3 cysteines and an exchangeable S-adenosyl-L-methionine.</text>
</comment>
<comment type="subunit">
    <text evidence="1">Monomer.</text>
</comment>
<comment type="subcellular location">
    <subcellularLocation>
        <location evidence="1">Cytoplasm</location>
    </subcellularLocation>
</comment>
<comment type="similarity">
    <text evidence="1">Belongs to the methylthiotransferase family. MiaB subfamily.</text>
</comment>